<protein>
    <recommendedName>
        <fullName evidence="1">UDP-N-acetylenolpyruvoylglucosamine reductase</fullName>
        <ecNumber evidence="1">1.3.1.98</ecNumber>
    </recommendedName>
    <alternativeName>
        <fullName evidence="1">UDP-N-acetylmuramate dehydrogenase</fullName>
    </alternativeName>
</protein>
<name>MURB_SHIBS</name>
<organism>
    <name type="scientific">Shigella boydii serotype 4 (strain Sb227)</name>
    <dbReference type="NCBI Taxonomy" id="300268"/>
    <lineage>
        <taxon>Bacteria</taxon>
        <taxon>Pseudomonadati</taxon>
        <taxon>Pseudomonadota</taxon>
        <taxon>Gammaproteobacteria</taxon>
        <taxon>Enterobacterales</taxon>
        <taxon>Enterobacteriaceae</taxon>
        <taxon>Shigella</taxon>
    </lineage>
</organism>
<keyword id="KW-0131">Cell cycle</keyword>
<keyword id="KW-0132">Cell division</keyword>
<keyword id="KW-0133">Cell shape</keyword>
<keyword id="KW-0961">Cell wall biogenesis/degradation</keyword>
<keyword id="KW-0963">Cytoplasm</keyword>
<keyword id="KW-0274">FAD</keyword>
<keyword id="KW-0285">Flavoprotein</keyword>
<keyword id="KW-0521">NADP</keyword>
<keyword id="KW-0560">Oxidoreductase</keyword>
<keyword id="KW-0573">Peptidoglycan synthesis</keyword>
<evidence type="ECO:0000255" key="1">
    <source>
        <dbReference type="HAMAP-Rule" id="MF_00037"/>
    </source>
</evidence>
<comment type="function">
    <text evidence="1">Cell wall formation.</text>
</comment>
<comment type="catalytic activity">
    <reaction evidence="1">
        <text>UDP-N-acetyl-alpha-D-muramate + NADP(+) = UDP-N-acetyl-3-O-(1-carboxyvinyl)-alpha-D-glucosamine + NADPH + H(+)</text>
        <dbReference type="Rhea" id="RHEA:12248"/>
        <dbReference type="ChEBI" id="CHEBI:15378"/>
        <dbReference type="ChEBI" id="CHEBI:57783"/>
        <dbReference type="ChEBI" id="CHEBI:58349"/>
        <dbReference type="ChEBI" id="CHEBI:68483"/>
        <dbReference type="ChEBI" id="CHEBI:70757"/>
        <dbReference type="EC" id="1.3.1.98"/>
    </reaction>
</comment>
<comment type="cofactor">
    <cofactor evidence="1">
        <name>FAD</name>
        <dbReference type="ChEBI" id="CHEBI:57692"/>
    </cofactor>
</comment>
<comment type="pathway">
    <text evidence="1">Cell wall biogenesis; peptidoglycan biosynthesis.</text>
</comment>
<comment type="subcellular location">
    <subcellularLocation>
        <location evidence="1">Cytoplasm</location>
    </subcellularLocation>
</comment>
<comment type="similarity">
    <text evidence="1">Belongs to the MurB family.</text>
</comment>
<accession>Q31U21</accession>
<proteinExistence type="inferred from homology"/>
<dbReference type="EC" id="1.3.1.98" evidence="1"/>
<dbReference type="EMBL" id="CP000036">
    <property type="protein sequence ID" value="ABB68437.1"/>
    <property type="molecule type" value="Genomic_DNA"/>
</dbReference>
<dbReference type="RefSeq" id="WP_001016691.1">
    <property type="nucleotide sequence ID" value="NC_007613.1"/>
</dbReference>
<dbReference type="SMR" id="Q31U21"/>
<dbReference type="KEGG" id="sbo:SBO_3992"/>
<dbReference type="HOGENOM" id="CLU_035304_0_0_6"/>
<dbReference type="UniPathway" id="UPA00219"/>
<dbReference type="Proteomes" id="UP000007067">
    <property type="component" value="Chromosome"/>
</dbReference>
<dbReference type="GO" id="GO:0005829">
    <property type="term" value="C:cytosol"/>
    <property type="evidence" value="ECO:0007669"/>
    <property type="project" value="TreeGrafter"/>
</dbReference>
<dbReference type="GO" id="GO:0071949">
    <property type="term" value="F:FAD binding"/>
    <property type="evidence" value="ECO:0007669"/>
    <property type="project" value="InterPro"/>
</dbReference>
<dbReference type="GO" id="GO:0008762">
    <property type="term" value="F:UDP-N-acetylmuramate dehydrogenase activity"/>
    <property type="evidence" value="ECO:0007669"/>
    <property type="project" value="UniProtKB-UniRule"/>
</dbReference>
<dbReference type="GO" id="GO:0051301">
    <property type="term" value="P:cell division"/>
    <property type="evidence" value="ECO:0007669"/>
    <property type="project" value="UniProtKB-KW"/>
</dbReference>
<dbReference type="GO" id="GO:0071555">
    <property type="term" value="P:cell wall organization"/>
    <property type="evidence" value="ECO:0007669"/>
    <property type="project" value="UniProtKB-KW"/>
</dbReference>
<dbReference type="GO" id="GO:0009252">
    <property type="term" value="P:peptidoglycan biosynthetic process"/>
    <property type="evidence" value="ECO:0007669"/>
    <property type="project" value="UniProtKB-UniRule"/>
</dbReference>
<dbReference type="GO" id="GO:0008360">
    <property type="term" value="P:regulation of cell shape"/>
    <property type="evidence" value="ECO:0007669"/>
    <property type="project" value="UniProtKB-KW"/>
</dbReference>
<dbReference type="FunFam" id="3.30.465.10:FF:000018">
    <property type="entry name" value="UDP-N-acetylenolpyruvoylglucosamine reductase"/>
    <property type="match status" value="1"/>
</dbReference>
<dbReference type="FunFam" id="3.90.78.10:FF:000002">
    <property type="entry name" value="UDP-N-acetylenolpyruvoylglucosamine reductase"/>
    <property type="match status" value="1"/>
</dbReference>
<dbReference type="Gene3D" id="3.30.465.10">
    <property type="match status" value="1"/>
</dbReference>
<dbReference type="Gene3D" id="3.90.78.10">
    <property type="entry name" value="UDP-N-acetylenolpyruvoylglucosamine reductase, C-terminal domain"/>
    <property type="match status" value="1"/>
</dbReference>
<dbReference type="Gene3D" id="3.30.43.10">
    <property type="entry name" value="Uridine Diphospho-n-acetylenolpyruvylglucosamine Reductase, domain 2"/>
    <property type="match status" value="1"/>
</dbReference>
<dbReference type="HAMAP" id="MF_00037">
    <property type="entry name" value="MurB"/>
    <property type="match status" value="1"/>
</dbReference>
<dbReference type="InterPro" id="IPR016166">
    <property type="entry name" value="FAD-bd_PCMH"/>
</dbReference>
<dbReference type="InterPro" id="IPR036318">
    <property type="entry name" value="FAD-bd_PCMH-like_sf"/>
</dbReference>
<dbReference type="InterPro" id="IPR016167">
    <property type="entry name" value="FAD-bd_PCMH_sub1"/>
</dbReference>
<dbReference type="InterPro" id="IPR016169">
    <property type="entry name" value="FAD-bd_PCMH_sub2"/>
</dbReference>
<dbReference type="InterPro" id="IPR003170">
    <property type="entry name" value="MurB"/>
</dbReference>
<dbReference type="InterPro" id="IPR011601">
    <property type="entry name" value="MurB_C"/>
</dbReference>
<dbReference type="InterPro" id="IPR036635">
    <property type="entry name" value="MurB_C_sf"/>
</dbReference>
<dbReference type="InterPro" id="IPR006094">
    <property type="entry name" value="Oxid_FAD_bind_N"/>
</dbReference>
<dbReference type="NCBIfam" id="TIGR00179">
    <property type="entry name" value="murB"/>
    <property type="match status" value="1"/>
</dbReference>
<dbReference type="NCBIfam" id="NF000755">
    <property type="entry name" value="PRK00046.1"/>
    <property type="match status" value="1"/>
</dbReference>
<dbReference type="NCBIfam" id="NF010478">
    <property type="entry name" value="PRK13903.1"/>
    <property type="match status" value="1"/>
</dbReference>
<dbReference type="PANTHER" id="PTHR21071">
    <property type="entry name" value="UDP-N-ACETYLENOLPYRUVOYLGLUCOSAMINE REDUCTASE"/>
    <property type="match status" value="1"/>
</dbReference>
<dbReference type="PANTHER" id="PTHR21071:SF4">
    <property type="entry name" value="UDP-N-ACETYLENOLPYRUVOYLGLUCOSAMINE REDUCTASE"/>
    <property type="match status" value="1"/>
</dbReference>
<dbReference type="Pfam" id="PF01565">
    <property type="entry name" value="FAD_binding_4"/>
    <property type="match status" value="1"/>
</dbReference>
<dbReference type="Pfam" id="PF02873">
    <property type="entry name" value="MurB_C"/>
    <property type="match status" value="1"/>
</dbReference>
<dbReference type="SUPFAM" id="SSF56176">
    <property type="entry name" value="FAD-binding/transporter-associated domain-like"/>
    <property type="match status" value="1"/>
</dbReference>
<dbReference type="SUPFAM" id="SSF56194">
    <property type="entry name" value="Uridine diphospho-N-Acetylenolpyruvylglucosamine reductase, MurB, C-terminal domain"/>
    <property type="match status" value="1"/>
</dbReference>
<dbReference type="PROSITE" id="PS51387">
    <property type="entry name" value="FAD_PCMH"/>
    <property type="match status" value="1"/>
</dbReference>
<feature type="chain" id="PRO_0000224718" description="UDP-N-acetylenolpyruvoylglucosamine reductase">
    <location>
        <begin position="1"/>
        <end position="342"/>
    </location>
</feature>
<feature type="domain" description="FAD-binding PCMH-type" evidence="1">
    <location>
        <begin position="13"/>
        <end position="183"/>
    </location>
</feature>
<feature type="active site" evidence="1">
    <location>
        <position position="159"/>
    </location>
</feature>
<feature type="active site" description="Proton donor" evidence="1">
    <location>
        <position position="229"/>
    </location>
</feature>
<feature type="active site" evidence="1">
    <location>
        <position position="325"/>
    </location>
</feature>
<reference key="1">
    <citation type="journal article" date="2005" name="Nucleic Acids Res.">
        <title>Genome dynamics and diversity of Shigella species, the etiologic agents of bacillary dysentery.</title>
        <authorList>
            <person name="Yang F."/>
            <person name="Yang J."/>
            <person name="Zhang X."/>
            <person name="Chen L."/>
            <person name="Jiang Y."/>
            <person name="Yan Y."/>
            <person name="Tang X."/>
            <person name="Wang J."/>
            <person name="Xiong Z."/>
            <person name="Dong J."/>
            <person name="Xue Y."/>
            <person name="Zhu Y."/>
            <person name="Xu X."/>
            <person name="Sun L."/>
            <person name="Chen S."/>
            <person name="Nie H."/>
            <person name="Peng J."/>
            <person name="Xu J."/>
            <person name="Wang Y."/>
            <person name="Yuan Z."/>
            <person name="Wen Y."/>
            <person name="Yao Z."/>
            <person name="Shen Y."/>
            <person name="Qiang B."/>
            <person name="Hou Y."/>
            <person name="Yu J."/>
            <person name="Jin Q."/>
        </authorList>
    </citation>
    <scope>NUCLEOTIDE SEQUENCE [LARGE SCALE GENOMIC DNA]</scope>
    <source>
        <strain>Sb227</strain>
    </source>
</reference>
<gene>
    <name evidence="1" type="primary">murB</name>
    <name type="ordered locus">SBO_3992</name>
</gene>
<sequence length="342" mass="37827">MNHSLKPWNTFGIDHNAQHIVCAEDEQQLLNAWQYATAEGQPVLILGEGSNVLFLEDYRGTVIINRIKGIEIHDEPDAWYLHVGAGENWHRLVKYTLQEGMPGLENLALIPGCVGSSPIQNIGAYGVELQRVCAYVDCVELATGKQVRLTAKECRFGYRDSIFKHEYQDRFAIVAVGLRLLKEWQPVLTYGDLTRLDPTTVTPQQVFNAVCHMRTTKLPDPKVNGNAGSFFKNPVVSAETAKALLAQFPTAPNYPQAGGSVKLAAGWLIDQCQLKGMQMGGAAVHRQQALVLINEDNAKSEDVVQLAHHVRQKVGEKFNVWLEPEVRFIGASGEVSAVETIS</sequence>